<sequence length="32" mass="3195">GLWSKIKEAAKAAGKAALNAVTGLVNQGDQPS</sequence>
<feature type="peptide" id="PRO_0000449602" description="Dermaseptin-L1">
    <location>
        <begin position="1"/>
        <end position="32"/>
    </location>
</feature>
<dbReference type="GO" id="GO:0005576">
    <property type="term" value="C:extracellular region"/>
    <property type="evidence" value="ECO:0007669"/>
    <property type="project" value="UniProtKB-SubCell"/>
</dbReference>
<dbReference type="GO" id="GO:0042742">
    <property type="term" value="P:defense response to bacterium"/>
    <property type="evidence" value="ECO:0007669"/>
    <property type="project" value="UniProtKB-KW"/>
</dbReference>
<dbReference type="InterPro" id="IPR022731">
    <property type="entry name" value="Dermaseptin_dom"/>
</dbReference>
<dbReference type="Pfam" id="PF12121">
    <property type="entry name" value="DD_K"/>
    <property type="match status" value="1"/>
</dbReference>
<organism>
    <name type="scientific">Agalychnis lemur</name>
    <name type="common">Lemur leaf frog</name>
    <name type="synonym">Hylomantis lemur</name>
    <dbReference type="NCBI Taxonomy" id="317382"/>
    <lineage>
        <taxon>Eukaryota</taxon>
        <taxon>Metazoa</taxon>
        <taxon>Chordata</taxon>
        <taxon>Craniata</taxon>
        <taxon>Vertebrata</taxon>
        <taxon>Euteleostomi</taxon>
        <taxon>Amphibia</taxon>
        <taxon>Batrachia</taxon>
        <taxon>Anura</taxon>
        <taxon>Neobatrachia</taxon>
        <taxon>Hyloidea</taxon>
        <taxon>Hylidae</taxon>
        <taxon>Phyllomedusinae</taxon>
        <taxon>Agalychnis</taxon>
    </lineage>
</organism>
<evidence type="ECO:0000269" key="1">
    <source>
    </source>
</evidence>
<evidence type="ECO:0000303" key="2">
    <source>
    </source>
</evidence>
<evidence type="ECO:0000305" key="3"/>
<evidence type="ECO:0000305" key="4">
    <source>
    </source>
</evidence>
<comment type="function">
    <text evidence="1">Antimicrobial peptide active against the Gram-negative bacterium E.coli (MIC=8 uM) but inactive against the Gram-positive bacterium S.aureus (PubMed:17561225). Also inhibits growth of zoospores of the chytrid fungus B.dendrobatidis at high concentrations (above 25 uM) (PubMed:17561225). Shows anticancer activities since it is cytolytic against HepG2 human hepatoma-derived cells (LC(50)=45 uM) (PubMed:17561225). Is only weakly hemolytic on human erythrocytes (PubMed:17561225).</text>
</comment>
<comment type="subcellular location">
    <subcellularLocation>
        <location evidence="1">Secreted</location>
    </subcellularLocation>
</comment>
<comment type="tissue specificity">
    <text evidence="4">Expressed by the skin glands.</text>
</comment>
<comment type="mass spectrometry" mass="3192.8" method="MALDI" evidence="1"/>
<comment type="similarity">
    <text evidence="3">Belongs to the frog skin active peptide (FSAP) family. Dermaseptin subfamily.</text>
</comment>
<comment type="online information" name="The antimicrobial peptide database">
    <link uri="https://wangapd3.com/database/query_output.php?ID=0964"/>
</comment>
<protein>
    <recommendedName>
        <fullName evidence="2">Dermaseptin-L1</fullName>
        <shortName evidence="2">DRS-L1</shortName>
    </recommendedName>
</protein>
<name>DRS1_AGALE</name>
<proteinExistence type="evidence at protein level"/>
<accession>P0DTD6</accession>
<reference key="1">
    <citation type="journal article" date="2007" name="Toxicon">
        <title>Peptides with differential cytolytic activity from skin secretions of the lemur leaf frog Hylomantis lemur (Hylidae: Phyllomedusinae).</title>
        <authorList>
            <person name="Conlon J.M."/>
            <person name="Woodhams D.C."/>
            <person name="Raza H."/>
            <person name="Coquet L."/>
            <person name="Leprince J."/>
            <person name="Jouenne T."/>
            <person name="Vaudry H."/>
            <person name="Rollins-Smith L.A."/>
        </authorList>
    </citation>
    <scope>PROTEIN SEQUENCE</scope>
    <scope>FUNCTION</scope>
    <scope>SUBCELLULAR LOCATION</scope>
    <scope>MASS SPECTROMETRY</scope>
    <source>
        <tissue>Skin secretion</tissue>
    </source>
</reference>
<reference key="2">
    <citation type="journal article" date="2008" name="Peptides">
        <title>A consistent nomenclature of antimicrobial peptides isolated from frogs of the subfamily Phyllomedusinae.</title>
        <authorList>
            <person name="Amiche M."/>
            <person name="Ladram A."/>
            <person name="Nicolas P."/>
        </authorList>
    </citation>
    <scope>NOMENCLATURE</scope>
</reference>
<keyword id="KW-0878">Amphibian defense peptide</keyword>
<keyword id="KW-0044">Antibiotic</keyword>
<keyword id="KW-0929">Antimicrobial</keyword>
<keyword id="KW-0903">Direct protein sequencing</keyword>
<keyword id="KW-0964">Secreted</keyword>